<proteinExistence type="evidence at protein level"/>
<keyword id="KW-0413">Isomerase</keyword>
<keyword id="KW-0511">Multifunctional enzyme</keyword>
<keyword id="KW-0521">NADP</keyword>
<keyword id="KW-0560">Oxidoreductase</keyword>
<keyword id="KW-1185">Reference proteome</keyword>
<sequence length="320" mass="36442">MTETTSKRTVLVTGGSGLVGKGIEKYVKETDKSNDVWVFMRSSDCDLKSRESTRSYFEKIKPTHVIHLAARVGGLFSNMKYKVEFFRENIDINDNVLACCKEFNVVKCVSCLSTCIFPDKTTYPIDETMIHNGPPHPSNEGYAYAKRMIDVLNRAYNEEYGCKFTSVIPTNIYGPHDNYHLTDGHVIPGLIHKTYLAMKNNQDLTIMGTGKPLRQFIYSYDLAKYFVWTLNNYEEMSPLILSVGEEDEISIADVARLITEAMEFKGKLIFDTSKADGQYKKTASNLKLKSLVPDLTFTPIQQAIKESCQWFIDNYETARK</sequence>
<accession>Q55C77</accession>
<protein>
    <recommendedName>
        <fullName evidence="2">GDP-L-fucose synthase</fullName>
        <ecNumber evidence="4">1.1.1.271</ecNumber>
    </recommendedName>
    <alternativeName>
        <fullName evidence="2">FX protein</fullName>
    </alternativeName>
    <alternativeName>
        <fullName evidence="2">GDP-4-keto-6-deoxy-D-mannose-3,5-epimerase-4-reductase</fullName>
        <shortName evidence="2">GER</shortName>
    </alternativeName>
</protein>
<evidence type="ECO:0000250" key="1"/>
<evidence type="ECO:0000303" key="2">
    <source>
    </source>
</evidence>
<evidence type="ECO:0000305" key="3"/>
<evidence type="ECO:0000305" key="4">
    <source>
    </source>
</evidence>
<gene>
    <name type="primary">ger</name>
    <name type="ORF">DDB_G0270184</name>
</gene>
<organism>
    <name type="scientific">Dictyostelium discoideum</name>
    <name type="common">Social amoeba</name>
    <dbReference type="NCBI Taxonomy" id="44689"/>
    <lineage>
        <taxon>Eukaryota</taxon>
        <taxon>Amoebozoa</taxon>
        <taxon>Evosea</taxon>
        <taxon>Eumycetozoa</taxon>
        <taxon>Dictyostelia</taxon>
        <taxon>Dictyosteliales</taxon>
        <taxon>Dictyosteliaceae</taxon>
        <taxon>Dictyostelium</taxon>
    </lineage>
</organism>
<dbReference type="EC" id="1.1.1.271" evidence="4"/>
<dbReference type="EMBL" id="AAFI02000005">
    <property type="protein sequence ID" value="EAL72442.1"/>
    <property type="molecule type" value="Genomic_DNA"/>
</dbReference>
<dbReference type="RefSeq" id="XP_646604.1">
    <property type="nucleotide sequence ID" value="XM_641512.1"/>
</dbReference>
<dbReference type="SMR" id="Q55C77"/>
<dbReference type="FunCoup" id="Q55C77">
    <property type="interactions" value="77"/>
</dbReference>
<dbReference type="STRING" id="44689.Q55C77"/>
<dbReference type="PaxDb" id="44689-DDB0305155"/>
<dbReference type="EnsemblProtists" id="EAL72442">
    <property type="protein sequence ID" value="EAL72442"/>
    <property type="gene ID" value="DDB_G0270184"/>
</dbReference>
<dbReference type="GeneID" id="8617576"/>
<dbReference type="KEGG" id="ddi:DDB_G0270184"/>
<dbReference type="dictyBase" id="DDB_G0270184">
    <property type="gene designation" value="ger"/>
</dbReference>
<dbReference type="VEuPathDB" id="AmoebaDB:DDB_G0270184"/>
<dbReference type="eggNOG" id="KOG1431">
    <property type="taxonomic scope" value="Eukaryota"/>
</dbReference>
<dbReference type="HOGENOM" id="CLU_007383_18_2_1"/>
<dbReference type="InParanoid" id="Q55C77"/>
<dbReference type="OMA" id="HPSNYGY"/>
<dbReference type="PhylomeDB" id="Q55C77"/>
<dbReference type="Reactome" id="R-DDI-6787639">
    <property type="pathway name" value="GDP-fucose biosynthesis"/>
</dbReference>
<dbReference type="UniPathway" id="UPA00128">
    <property type="reaction ID" value="UER00191"/>
</dbReference>
<dbReference type="PRO" id="PR:Q55C77"/>
<dbReference type="Proteomes" id="UP000002195">
    <property type="component" value="Chromosome 1"/>
</dbReference>
<dbReference type="GO" id="GO:0050577">
    <property type="term" value="F:GDP-L-fucose synthase activity"/>
    <property type="evidence" value="ECO:0000314"/>
    <property type="project" value="dictyBase"/>
</dbReference>
<dbReference type="GO" id="GO:0016853">
    <property type="term" value="F:isomerase activity"/>
    <property type="evidence" value="ECO:0007669"/>
    <property type="project" value="UniProtKB-KW"/>
</dbReference>
<dbReference type="GO" id="GO:0042351">
    <property type="term" value="P:'de novo' GDP-L-fucose biosynthetic process"/>
    <property type="evidence" value="ECO:0000314"/>
    <property type="project" value="dictyBase"/>
</dbReference>
<dbReference type="CDD" id="cd05239">
    <property type="entry name" value="GDP_FS_SDR_e"/>
    <property type="match status" value="1"/>
</dbReference>
<dbReference type="Gene3D" id="3.40.50.720">
    <property type="entry name" value="NAD(P)-binding Rossmann-like Domain"/>
    <property type="match status" value="1"/>
</dbReference>
<dbReference type="Gene3D" id="3.90.25.10">
    <property type="entry name" value="UDP-galactose 4-epimerase, domain 1"/>
    <property type="match status" value="1"/>
</dbReference>
<dbReference type="HAMAP" id="MF_00956">
    <property type="entry name" value="GDP_fucose_synth"/>
    <property type="match status" value="1"/>
</dbReference>
<dbReference type="InterPro" id="IPR001509">
    <property type="entry name" value="Epimerase_deHydtase"/>
</dbReference>
<dbReference type="InterPro" id="IPR028614">
    <property type="entry name" value="GDP_fucose/colitose_synth"/>
</dbReference>
<dbReference type="InterPro" id="IPR036291">
    <property type="entry name" value="NAD(P)-bd_dom_sf"/>
</dbReference>
<dbReference type="PANTHER" id="PTHR43238">
    <property type="entry name" value="GDP-L-FUCOSE SYNTHASE"/>
    <property type="match status" value="1"/>
</dbReference>
<dbReference type="PANTHER" id="PTHR43238:SF1">
    <property type="entry name" value="GDP-L-FUCOSE SYNTHASE"/>
    <property type="match status" value="1"/>
</dbReference>
<dbReference type="Pfam" id="PF01370">
    <property type="entry name" value="Epimerase"/>
    <property type="match status" value="1"/>
</dbReference>
<dbReference type="SUPFAM" id="SSF51735">
    <property type="entry name" value="NAD(P)-binding Rossmann-fold domains"/>
    <property type="match status" value="1"/>
</dbReference>
<comment type="function">
    <text evidence="4">Catalyzes the two-step NADP-dependent conversion of GDP-4-dehydro-6-deoxy-D-mannose to GDP-fucose, involving an epimerase and a reductase reaction.</text>
</comment>
<comment type="catalytic activity">
    <reaction evidence="4">
        <text>GDP-beta-L-fucose + NADP(+) = GDP-4-dehydro-alpha-D-rhamnose + NADPH + H(+)</text>
        <dbReference type="Rhea" id="RHEA:18885"/>
        <dbReference type="ChEBI" id="CHEBI:15378"/>
        <dbReference type="ChEBI" id="CHEBI:57273"/>
        <dbReference type="ChEBI" id="CHEBI:57783"/>
        <dbReference type="ChEBI" id="CHEBI:57964"/>
        <dbReference type="ChEBI" id="CHEBI:58349"/>
        <dbReference type="EC" id="1.1.1.271"/>
    </reaction>
    <physiologicalReaction direction="right-to-left" evidence="4">
        <dbReference type="Rhea" id="RHEA:18887"/>
    </physiologicalReaction>
</comment>
<comment type="pathway">
    <text evidence="4">Nucleotide-sugar biosynthesis; GDP-L-fucose biosynthesis via de novo pathway; GDP-L-fucose from GDP-alpha-D-mannose: step 2/2.</text>
</comment>
<comment type="similarity">
    <text evidence="3">Belongs to the NAD(P)-dependent epimerase/dehydratase family. Fucose synthase subfamily.</text>
</comment>
<reference key="1">
    <citation type="journal article" date="2005" name="Nature">
        <title>The genome of the social amoeba Dictyostelium discoideum.</title>
        <authorList>
            <person name="Eichinger L."/>
            <person name="Pachebat J.A."/>
            <person name="Gloeckner G."/>
            <person name="Rajandream M.A."/>
            <person name="Sucgang R."/>
            <person name="Berriman M."/>
            <person name="Song J."/>
            <person name="Olsen R."/>
            <person name="Szafranski K."/>
            <person name="Xu Q."/>
            <person name="Tunggal B."/>
            <person name="Kummerfeld S."/>
            <person name="Madera M."/>
            <person name="Konfortov B.A."/>
            <person name="Rivero F."/>
            <person name="Bankier A.T."/>
            <person name="Lehmann R."/>
            <person name="Hamlin N."/>
            <person name="Davies R."/>
            <person name="Gaudet P."/>
            <person name="Fey P."/>
            <person name="Pilcher K."/>
            <person name="Chen G."/>
            <person name="Saunders D."/>
            <person name="Sodergren E.J."/>
            <person name="Davis P."/>
            <person name="Kerhornou A."/>
            <person name="Nie X."/>
            <person name="Hall N."/>
            <person name="Anjard C."/>
            <person name="Hemphill L."/>
            <person name="Bason N."/>
            <person name="Farbrother P."/>
            <person name="Desany B."/>
            <person name="Just E."/>
            <person name="Morio T."/>
            <person name="Rost R."/>
            <person name="Churcher C.M."/>
            <person name="Cooper J."/>
            <person name="Haydock S."/>
            <person name="van Driessche N."/>
            <person name="Cronin A."/>
            <person name="Goodhead I."/>
            <person name="Muzny D.M."/>
            <person name="Mourier T."/>
            <person name="Pain A."/>
            <person name="Lu M."/>
            <person name="Harper D."/>
            <person name="Lindsay R."/>
            <person name="Hauser H."/>
            <person name="James K.D."/>
            <person name="Quiles M."/>
            <person name="Madan Babu M."/>
            <person name="Saito T."/>
            <person name="Buchrieser C."/>
            <person name="Wardroper A."/>
            <person name="Felder M."/>
            <person name="Thangavelu M."/>
            <person name="Johnson D."/>
            <person name="Knights A."/>
            <person name="Loulseged H."/>
            <person name="Mungall K.L."/>
            <person name="Oliver K."/>
            <person name="Price C."/>
            <person name="Quail M.A."/>
            <person name="Urushihara H."/>
            <person name="Hernandez J."/>
            <person name="Rabbinowitsch E."/>
            <person name="Steffen D."/>
            <person name="Sanders M."/>
            <person name="Ma J."/>
            <person name="Kohara Y."/>
            <person name="Sharp S."/>
            <person name="Simmonds M.N."/>
            <person name="Spiegler S."/>
            <person name="Tivey A."/>
            <person name="Sugano S."/>
            <person name="White B."/>
            <person name="Walker D."/>
            <person name="Woodward J.R."/>
            <person name="Winckler T."/>
            <person name="Tanaka Y."/>
            <person name="Shaulsky G."/>
            <person name="Schleicher M."/>
            <person name="Weinstock G.M."/>
            <person name="Rosenthal A."/>
            <person name="Cox E.C."/>
            <person name="Chisholm R.L."/>
            <person name="Gibbs R.A."/>
            <person name="Loomis W.F."/>
            <person name="Platzer M."/>
            <person name="Kay R.R."/>
            <person name="Williams J.G."/>
            <person name="Dear P.H."/>
            <person name="Noegel A.A."/>
            <person name="Barrell B.G."/>
            <person name="Kuspa A."/>
        </authorList>
    </citation>
    <scope>NUCLEOTIDE SEQUENCE [LARGE SCALE GENOMIC DNA]</scope>
    <source>
        <strain>AX4</strain>
    </source>
</reference>
<reference key="2">
    <citation type="journal article" date="2009" name="Biochem. J.">
        <title>Development of Dictyostelium discoideum is associated with alteration of fucosylated N-glycan structures.</title>
        <authorList>
            <person name="Schiller B."/>
            <person name="Hykollari A."/>
            <person name="Voglmeir J."/>
            <person name="Poltl G."/>
            <person name="Hummel K."/>
            <person name="Razzazi-Fazeli E."/>
            <person name="Geyer R."/>
            <person name="Wilson I.B.H."/>
        </authorList>
    </citation>
    <scope>IDENTIFICATION</scope>
    <scope>FUNCTION</scope>
    <scope>CATALYTIC ACTIVITY</scope>
    <scope>PATHWAY</scope>
</reference>
<feature type="chain" id="PRO_0000383346" description="GDP-L-fucose synthase">
    <location>
        <begin position="1"/>
        <end position="320"/>
    </location>
</feature>
<feature type="active site" description="Proton donor/acceptor" evidence="1">
    <location>
        <position position="142"/>
    </location>
</feature>
<feature type="binding site" evidence="1">
    <location>
        <begin position="14"/>
        <end position="20"/>
    </location>
    <ligand>
        <name>NADP(+)</name>
        <dbReference type="ChEBI" id="CHEBI:58349"/>
    </ligand>
</feature>
<feature type="binding site" evidence="1">
    <location>
        <position position="146"/>
    </location>
    <ligand>
        <name>NADP(+)</name>
        <dbReference type="ChEBI" id="CHEBI:58349"/>
    </ligand>
</feature>
<feature type="binding site" evidence="1">
    <location>
        <begin position="169"/>
        <end position="172"/>
    </location>
    <ligand>
        <name>NADP(+)</name>
        <dbReference type="ChEBI" id="CHEBI:58349"/>
    </ligand>
</feature>
<feature type="binding site" evidence="1">
    <location>
        <position position="185"/>
    </location>
    <ligand>
        <name>NADP(+)</name>
        <dbReference type="ChEBI" id="CHEBI:58349"/>
    </ligand>
</feature>
<feature type="binding site" evidence="1">
    <location>
        <position position="193"/>
    </location>
    <ligand>
        <name>substrate</name>
    </ligand>
</feature>
<feature type="binding site" evidence="1">
    <location>
        <position position="214"/>
    </location>
    <ligand>
        <name>substrate</name>
    </ligand>
</feature>
<feature type="binding site" evidence="1">
    <location>
        <position position="276"/>
    </location>
    <ligand>
        <name>substrate</name>
    </ligand>
</feature>
<feature type="site" description="Important for catalytic activity" evidence="1">
    <location>
        <position position="113"/>
    </location>
</feature>
<feature type="site" description="Important for catalytic activity" evidence="1">
    <location>
        <position position="115"/>
    </location>
</feature>
<feature type="site" description="Lowers pKa of active site Tyr" evidence="1">
    <location>
        <position position="146"/>
    </location>
</feature>
<name>FCL_DICDI</name>